<protein>
    <recommendedName>
        <fullName evidence="1">Cell division protein ZapD</fullName>
    </recommendedName>
    <alternativeName>
        <fullName evidence="1">Z ring-associated protein D</fullName>
    </alternativeName>
</protein>
<keyword id="KW-0131">Cell cycle</keyword>
<keyword id="KW-0132">Cell division</keyword>
<keyword id="KW-0963">Cytoplasm</keyword>
<keyword id="KW-0717">Septation</keyword>
<dbReference type="EMBL" id="CP000089">
    <property type="protein sequence ID" value="AAZ48437.1"/>
    <property type="molecule type" value="Genomic_DNA"/>
</dbReference>
<dbReference type="SMR" id="Q479P4"/>
<dbReference type="STRING" id="159087.Daro_3708"/>
<dbReference type="KEGG" id="dar:Daro_3708"/>
<dbReference type="eggNOG" id="COG4582">
    <property type="taxonomic scope" value="Bacteria"/>
</dbReference>
<dbReference type="HOGENOM" id="CLU_076303_0_1_4"/>
<dbReference type="OrthoDB" id="5294622at2"/>
<dbReference type="GO" id="GO:0032153">
    <property type="term" value="C:cell division site"/>
    <property type="evidence" value="ECO:0007669"/>
    <property type="project" value="TreeGrafter"/>
</dbReference>
<dbReference type="GO" id="GO:0005737">
    <property type="term" value="C:cytoplasm"/>
    <property type="evidence" value="ECO:0007669"/>
    <property type="project" value="UniProtKB-SubCell"/>
</dbReference>
<dbReference type="GO" id="GO:0000917">
    <property type="term" value="P:division septum assembly"/>
    <property type="evidence" value="ECO:0007669"/>
    <property type="project" value="UniProtKB-KW"/>
</dbReference>
<dbReference type="GO" id="GO:0043093">
    <property type="term" value="P:FtsZ-dependent cytokinesis"/>
    <property type="evidence" value="ECO:0007669"/>
    <property type="project" value="UniProtKB-UniRule"/>
</dbReference>
<dbReference type="Gene3D" id="1.10.3900.10">
    <property type="entry name" value="YacF-like"/>
    <property type="match status" value="1"/>
</dbReference>
<dbReference type="Gene3D" id="2.60.440.10">
    <property type="entry name" value="YacF-like domains"/>
    <property type="match status" value="1"/>
</dbReference>
<dbReference type="HAMAP" id="MF_01092">
    <property type="entry name" value="ZapD"/>
    <property type="match status" value="1"/>
</dbReference>
<dbReference type="InterPro" id="IPR009777">
    <property type="entry name" value="ZapD"/>
</dbReference>
<dbReference type="InterPro" id="IPR027462">
    <property type="entry name" value="ZapD_C"/>
</dbReference>
<dbReference type="InterPro" id="IPR036268">
    <property type="entry name" value="ZapD_sf"/>
</dbReference>
<dbReference type="NCBIfam" id="NF003656">
    <property type="entry name" value="PRK05287.1-4"/>
    <property type="match status" value="1"/>
</dbReference>
<dbReference type="PANTHER" id="PTHR39455">
    <property type="entry name" value="CELL DIVISION PROTEIN ZAPD"/>
    <property type="match status" value="1"/>
</dbReference>
<dbReference type="PANTHER" id="PTHR39455:SF1">
    <property type="entry name" value="CELL DIVISION PROTEIN ZAPD"/>
    <property type="match status" value="1"/>
</dbReference>
<dbReference type="Pfam" id="PF07072">
    <property type="entry name" value="ZapD"/>
    <property type="match status" value="1"/>
</dbReference>
<dbReference type="SUPFAM" id="SSF160950">
    <property type="entry name" value="YacF-like"/>
    <property type="match status" value="1"/>
</dbReference>
<proteinExistence type="inferred from homology"/>
<reference key="1">
    <citation type="journal article" date="2009" name="BMC Genomics">
        <title>Metabolic analysis of the soil microbe Dechloromonas aromatica str. RCB: indications of a surprisingly complex life-style and cryptic anaerobic pathways for aromatic degradation.</title>
        <authorList>
            <person name="Salinero K.K."/>
            <person name="Keller K."/>
            <person name="Feil W.S."/>
            <person name="Feil H."/>
            <person name="Trong S."/>
            <person name="Di Bartolo G."/>
            <person name="Lapidus A."/>
        </authorList>
    </citation>
    <scope>NUCLEOTIDE SEQUENCE [LARGE SCALE GENOMIC DNA]</scope>
    <source>
        <strain>RCB</strain>
    </source>
</reference>
<feature type="chain" id="PRO_1000064905" description="Cell division protein ZapD">
    <location>
        <begin position="1"/>
        <end position="252"/>
    </location>
</feature>
<sequence>MITYEYPFNERIRTLLRLEDLFEKTAYFTQEDGALEHHAALVSMFEILEVAGRADLKMDLIQELERQRQTLLAFRNNPDISEEALSGALYEIEQSSAALLGMAGKIGQYLRENDWLMSIKSRAAIPGGVCEFDLPSYHWWLHRSPETRRDALEGWLKPMLPLRDAAAIVLRLLRSSGRPKNYTATNGQFQLNLGGSAAQMVRVTVHVDEQAIPEVSANKYFLNIRFTKPPAGEIKARGCERDVAFDLTFCNL</sequence>
<evidence type="ECO:0000255" key="1">
    <source>
        <dbReference type="HAMAP-Rule" id="MF_01092"/>
    </source>
</evidence>
<comment type="function">
    <text evidence="1">Cell division factor that enhances FtsZ-ring assembly. Directly interacts with FtsZ and promotes bundling of FtsZ protofilaments, with a reduction in FtsZ GTPase activity.</text>
</comment>
<comment type="subunit">
    <text evidence="1">Interacts with FtsZ.</text>
</comment>
<comment type="subcellular location">
    <subcellularLocation>
        <location evidence="1">Cytoplasm</location>
    </subcellularLocation>
    <text evidence="1">Localizes to mid-cell in an FtsZ-dependent manner.</text>
</comment>
<comment type="similarity">
    <text evidence="1">Belongs to the ZapD family.</text>
</comment>
<gene>
    <name evidence="1" type="primary">zapD</name>
    <name type="ordered locus">Daro_3708</name>
</gene>
<name>ZAPD_DECAR</name>
<organism>
    <name type="scientific">Dechloromonas aromatica (strain RCB)</name>
    <dbReference type="NCBI Taxonomy" id="159087"/>
    <lineage>
        <taxon>Bacteria</taxon>
        <taxon>Pseudomonadati</taxon>
        <taxon>Pseudomonadota</taxon>
        <taxon>Betaproteobacteria</taxon>
        <taxon>Rhodocyclales</taxon>
        <taxon>Azonexaceae</taxon>
        <taxon>Dechloromonas</taxon>
    </lineage>
</organism>
<accession>Q479P4</accession>